<dbReference type="EMBL" id="U64616">
    <property type="protein sequence ID" value="AAB60783.1"/>
    <property type="molecule type" value="Genomic_DNA"/>
</dbReference>
<dbReference type="SMR" id="Q95190"/>
<dbReference type="GO" id="GO:0072562">
    <property type="term" value="C:blood microparticle"/>
    <property type="evidence" value="ECO:0007669"/>
    <property type="project" value="TreeGrafter"/>
</dbReference>
<dbReference type="GO" id="GO:0031838">
    <property type="term" value="C:haptoglobin-hemoglobin complex"/>
    <property type="evidence" value="ECO:0007669"/>
    <property type="project" value="TreeGrafter"/>
</dbReference>
<dbReference type="GO" id="GO:0005833">
    <property type="term" value="C:hemoglobin complex"/>
    <property type="evidence" value="ECO:0007669"/>
    <property type="project" value="InterPro"/>
</dbReference>
<dbReference type="GO" id="GO:0031720">
    <property type="term" value="F:haptoglobin binding"/>
    <property type="evidence" value="ECO:0007669"/>
    <property type="project" value="TreeGrafter"/>
</dbReference>
<dbReference type="GO" id="GO:0020037">
    <property type="term" value="F:heme binding"/>
    <property type="evidence" value="ECO:0007669"/>
    <property type="project" value="InterPro"/>
</dbReference>
<dbReference type="GO" id="GO:0031721">
    <property type="term" value="F:hemoglobin alpha binding"/>
    <property type="evidence" value="ECO:0007669"/>
    <property type="project" value="TreeGrafter"/>
</dbReference>
<dbReference type="GO" id="GO:0046872">
    <property type="term" value="F:metal ion binding"/>
    <property type="evidence" value="ECO:0007669"/>
    <property type="project" value="UniProtKB-KW"/>
</dbReference>
<dbReference type="GO" id="GO:0043177">
    <property type="term" value="F:organic acid binding"/>
    <property type="evidence" value="ECO:0007669"/>
    <property type="project" value="TreeGrafter"/>
</dbReference>
<dbReference type="GO" id="GO:0019825">
    <property type="term" value="F:oxygen binding"/>
    <property type="evidence" value="ECO:0007669"/>
    <property type="project" value="InterPro"/>
</dbReference>
<dbReference type="GO" id="GO:0005344">
    <property type="term" value="F:oxygen carrier activity"/>
    <property type="evidence" value="ECO:0007669"/>
    <property type="project" value="UniProtKB-KW"/>
</dbReference>
<dbReference type="GO" id="GO:0004601">
    <property type="term" value="F:peroxidase activity"/>
    <property type="evidence" value="ECO:0007669"/>
    <property type="project" value="TreeGrafter"/>
</dbReference>
<dbReference type="GO" id="GO:0042744">
    <property type="term" value="P:hydrogen peroxide catabolic process"/>
    <property type="evidence" value="ECO:0007669"/>
    <property type="project" value="TreeGrafter"/>
</dbReference>
<dbReference type="CDD" id="cd08925">
    <property type="entry name" value="Hb-beta-like"/>
    <property type="match status" value="1"/>
</dbReference>
<dbReference type="FunFam" id="1.10.490.10:FF:000001">
    <property type="entry name" value="Hemoglobin subunit beta"/>
    <property type="match status" value="1"/>
</dbReference>
<dbReference type="Gene3D" id="1.10.490.10">
    <property type="entry name" value="Globins"/>
    <property type="match status" value="1"/>
</dbReference>
<dbReference type="InterPro" id="IPR000971">
    <property type="entry name" value="Globin"/>
</dbReference>
<dbReference type="InterPro" id="IPR009050">
    <property type="entry name" value="Globin-like_sf"/>
</dbReference>
<dbReference type="InterPro" id="IPR012292">
    <property type="entry name" value="Globin/Proto"/>
</dbReference>
<dbReference type="InterPro" id="IPR002337">
    <property type="entry name" value="Hemoglobin_b"/>
</dbReference>
<dbReference type="InterPro" id="IPR050056">
    <property type="entry name" value="Hemoglobin_oxygen_transport"/>
</dbReference>
<dbReference type="PANTHER" id="PTHR11442">
    <property type="entry name" value="HEMOGLOBIN FAMILY MEMBER"/>
    <property type="match status" value="1"/>
</dbReference>
<dbReference type="PANTHER" id="PTHR11442:SF7">
    <property type="entry name" value="HEMOGLOBIN SUBUNIT EPSILON"/>
    <property type="match status" value="1"/>
</dbReference>
<dbReference type="Pfam" id="PF00042">
    <property type="entry name" value="Globin"/>
    <property type="match status" value="1"/>
</dbReference>
<dbReference type="PRINTS" id="PR00814">
    <property type="entry name" value="BETAHAEM"/>
</dbReference>
<dbReference type="SUPFAM" id="SSF46458">
    <property type="entry name" value="Globin-like"/>
    <property type="match status" value="1"/>
</dbReference>
<dbReference type="PROSITE" id="PS01033">
    <property type="entry name" value="GLOBIN"/>
    <property type="match status" value="1"/>
</dbReference>
<gene>
    <name type="primary">HBE1</name>
</gene>
<organism>
    <name type="scientific">Symphalangus syndactylus</name>
    <name type="common">Siamang</name>
    <name type="synonym">Hylobates syndactylus</name>
    <dbReference type="NCBI Taxonomy" id="9590"/>
    <lineage>
        <taxon>Eukaryota</taxon>
        <taxon>Metazoa</taxon>
        <taxon>Chordata</taxon>
        <taxon>Craniata</taxon>
        <taxon>Vertebrata</taxon>
        <taxon>Euteleostomi</taxon>
        <taxon>Mammalia</taxon>
        <taxon>Eutheria</taxon>
        <taxon>Euarchontoglires</taxon>
        <taxon>Primates</taxon>
        <taxon>Haplorrhini</taxon>
        <taxon>Catarrhini</taxon>
        <taxon>Hylobatidae</taxon>
        <taxon>Symphalangus</taxon>
    </lineage>
</organism>
<comment type="function">
    <text>The epsilon chain is a beta-type chain of early mammalian embryonic hemoglobin.</text>
</comment>
<comment type="subunit">
    <text>Heterotetramer of two alpha chains and two epsilon chains in early embryonic hemoglobin Gower-2; two zeta chains and two epsilon chains in early embryonic hemoglobin Gower-1.</text>
</comment>
<comment type="tissue specificity">
    <text>Red blood cells.</text>
</comment>
<comment type="similarity">
    <text evidence="2">Belongs to the globin family.</text>
</comment>
<evidence type="ECO:0000250" key="1">
    <source>
        <dbReference type="UniProtKB" id="P02100"/>
    </source>
</evidence>
<evidence type="ECO:0000255" key="2">
    <source>
        <dbReference type="PROSITE-ProRule" id="PRU00238"/>
    </source>
</evidence>
<name>HBE_SYMSY</name>
<feature type="chain" id="PRO_0000053213" description="Hemoglobin subunit epsilon">
    <location>
        <begin position="1"/>
        <end position="147"/>
    </location>
</feature>
<feature type="domain" description="Globin" evidence="2">
    <location>
        <begin position="3"/>
        <end position="147"/>
    </location>
</feature>
<feature type="binding site" description="distal binding residue" evidence="2">
    <location>
        <position position="64"/>
    </location>
    <ligand>
        <name>heme b</name>
        <dbReference type="ChEBI" id="CHEBI:60344"/>
    </ligand>
    <ligandPart>
        <name>Fe</name>
        <dbReference type="ChEBI" id="CHEBI:18248"/>
    </ligandPart>
</feature>
<feature type="binding site" description="proximal binding residue" evidence="2">
    <location>
        <position position="93"/>
    </location>
    <ligand>
        <name>heme b</name>
        <dbReference type="ChEBI" id="CHEBI:60344"/>
    </ligand>
    <ligandPart>
        <name>Fe</name>
        <dbReference type="ChEBI" id="CHEBI:18248"/>
    </ligandPart>
</feature>
<feature type="modified residue" description="Phosphoserine" evidence="1">
    <location>
        <position position="14"/>
    </location>
</feature>
<feature type="modified residue" description="Phosphoserine" evidence="1">
    <location>
        <position position="51"/>
    </location>
</feature>
<keyword id="KW-0349">Heme</keyword>
<keyword id="KW-0408">Iron</keyword>
<keyword id="KW-0479">Metal-binding</keyword>
<keyword id="KW-0561">Oxygen transport</keyword>
<keyword id="KW-0597">Phosphoprotein</keyword>
<keyword id="KW-0813">Transport</keyword>
<reference key="1">
    <citation type="journal article" date="1997" name="Int. J. Primatol.">
        <title>Phylogeny and evolution of selected primates as determined by sequences of the epsilon globin locus and 5' flanking regions.</title>
        <authorList>
            <person name="Porter C.A."/>
            <person name="Page S.L."/>
            <person name="Czelusniak J."/>
            <person name="Schneider H."/>
            <person name="Schneider M.P.C."/>
            <person name="Sampaio I."/>
            <person name="Goodman M."/>
        </authorList>
    </citation>
    <scope>NUCLEOTIDE SEQUENCE [GENOMIC DNA]</scope>
</reference>
<proteinExistence type="evidence at transcript level"/>
<sequence>MVHFTAEEKAAVTSLWNKMNVEEAGGEALGRLLVVYPWTQRFFDSFGNLSSPSAILGNPKVKAHGKKVLTSFGDAIKNMDNLKTTFAKLSELHCDKLHVDPENFKLLGNVMVIILATHFGKEFTPEVQAAWQKLVSAVAIALAHKYH</sequence>
<protein>
    <recommendedName>
        <fullName>Hemoglobin subunit epsilon</fullName>
    </recommendedName>
    <alternativeName>
        <fullName>Epsilon-globin</fullName>
    </alternativeName>
    <alternativeName>
        <fullName>Hemoglobin epsilon chain</fullName>
    </alternativeName>
</protein>
<accession>Q95190</accession>